<accession>Q8EM78</accession>
<reference key="1">
    <citation type="journal article" date="2002" name="Nucleic Acids Res.">
        <title>Genome sequence of Oceanobacillus iheyensis isolated from the Iheya Ridge and its unexpected adaptive capabilities to extreme environments.</title>
        <authorList>
            <person name="Takami H."/>
            <person name="Takaki Y."/>
            <person name="Uchiyama I."/>
        </authorList>
    </citation>
    <scope>NUCLEOTIDE SEQUENCE [LARGE SCALE GENOMIC DNA]</scope>
    <source>
        <strain>DSM 14371 / CIP 107618 / JCM 11309 / KCTC 3954 / HTE831</strain>
    </source>
</reference>
<organism>
    <name type="scientific">Oceanobacillus iheyensis (strain DSM 14371 / CIP 107618 / JCM 11309 / KCTC 3954 / HTE831)</name>
    <dbReference type="NCBI Taxonomy" id="221109"/>
    <lineage>
        <taxon>Bacteria</taxon>
        <taxon>Bacillati</taxon>
        <taxon>Bacillota</taxon>
        <taxon>Bacilli</taxon>
        <taxon>Bacillales</taxon>
        <taxon>Bacillaceae</taxon>
        <taxon>Oceanobacillus</taxon>
    </lineage>
</organism>
<keyword id="KW-0066">ATP synthesis</keyword>
<keyword id="KW-1003">Cell membrane</keyword>
<keyword id="KW-0138">CF(0)</keyword>
<keyword id="KW-0375">Hydrogen ion transport</keyword>
<keyword id="KW-0406">Ion transport</keyword>
<keyword id="KW-0446">Lipid-binding</keyword>
<keyword id="KW-0472">Membrane</keyword>
<keyword id="KW-1185">Reference proteome</keyword>
<keyword id="KW-0812">Transmembrane</keyword>
<keyword id="KW-1133">Transmembrane helix</keyword>
<keyword id="KW-0813">Transport</keyword>
<comment type="function">
    <text evidence="1">F(1)F(0) ATP synthase produces ATP from ADP in the presence of a proton or sodium gradient. F-type ATPases consist of two structural domains, F(1) containing the extramembraneous catalytic core and F(0) containing the membrane proton channel, linked together by a central stalk and a peripheral stalk. During catalysis, ATP synthesis in the catalytic domain of F(1) is coupled via a rotary mechanism of the central stalk subunits to proton translocation.</text>
</comment>
<comment type="function">
    <text evidence="1">Key component of the F(0) channel; it plays a direct role in translocation across the membrane. A homomeric c-ring of between 10-14 subunits forms the central stalk rotor element with the F(1) delta and epsilon subunits.</text>
</comment>
<comment type="subunit">
    <text evidence="1">F-type ATPases have 2 components, F(1) - the catalytic core - and F(0) - the membrane proton channel. F(1) has five subunits: alpha(3), beta(3), gamma(1), delta(1), epsilon(1). F(0) has three main subunits: a(1), b(2) and c(10-14). The alpha and beta chains form an alternating ring which encloses part of the gamma chain. F(1) is attached to F(0) by a central stalk formed by the gamma and epsilon chains, while a peripheral stalk is formed by the delta and b chains.</text>
</comment>
<comment type="subcellular location">
    <subcellularLocation>
        <location evidence="1">Cell membrane</location>
        <topology evidence="1">Multi-pass membrane protein</topology>
    </subcellularLocation>
</comment>
<comment type="similarity">
    <text evidence="1">Belongs to the ATPase C chain family.</text>
</comment>
<evidence type="ECO:0000255" key="1">
    <source>
        <dbReference type="HAMAP-Rule" id="MF_01396"/>
    </source>
</evidence>
<gene>
    <name evidence="1" type="primary">atpE</name>
    <name type="ordered locus">OB2980</name>
</gene>
<protein>
    <recommendedName>
        <fullName evidence="1">ATP synthase subunit c</fullName>
    </recommendedName>
    <alternativeName>
        <fullName evidence="1">ATP synthase F(0) sector subunit c</fullName>
    </alternativeName>
    <alternativeName>
        <fullName evidence="1">F-type ATPase subunit c</fullName>
        <shortName evidence="1">F-ATPase subunit c</shortName>
    </alternativeName>
    <alternativeName>
        <fullName evidence="1">Lipid-binding protein</fullName>
    </alternativeName>
</protein>
<dbReference type="EMBL" id="BA000028">
    <property type="protein sequence ID" value="BAC14936.1"/>
    <property type="molecule type" value="Genomic_DNA"/>
</dbReference>
<dbReference type="RefSeq" id="WP_011067377.1">
    <property type="nucleotide sequence ID" value="NC_004193.1"/>
</dbReference>
<dbReference type="SMR" id="Q8EM78"/>
<dbReference type="STRING" id="221109.gene:10735232"/>
<dbReference type="KEGG" id="oih:OB2980"/>
<dbReference type="eggNOG" id="COG0636">
    <property type="taxonomic scope" value="Bacteria"/>
</dbReference>
<dbReference type="HOGENOM" id="CLU_148047_1_1_9"/>
<dbReference type="Proteomes" id="UP000000822">
    <property type="component" value="Chromosome"/>
</dbReference>
<dbReference type="GO" id="GO:0005886">
    <property type="term" value="C:plasma membrane"/>
    <property type="evidence" value="ECO:0007669"/>
    <property type="project" value="UniProtKB-SubCell"/>
</dbReference>
<dbReference type="GO" id="GO:0045259">
    <property type="term" value="C:proton-transporting ATP synthase complex"/>
    <property type="evidence" value="ECO:0007669"/>
    <property type="project" value="UniProtKB-KW"/>
</dbReference>
<dbReference type="GO" id="GO:0033177">
    <property type="term" value="C:proton-transporting two-sector ATPase complex, proton-transporting domain"/>
    <property type="evidence" value="ECO:0007669"/>
    <property type="project" value="InterPro"/>
</dbReference>
<dbReference type="GO" id="GO:0008289">
    <property type="term" value="F:lipid binding"/>
    <property type="evidence" value="ECO:0007669"/>
    <property type="project" value="UniProtKB-KW"/>
</dbReference>
<dbReference type="GO" id="GO:0046933">
    <property type="term" value="F:proton-transporting ATP synthase activity, rotational mechanism"/>
    <property type="evidence" value="ECO:0007669"/>
    <property type="project" value="UniProtKB-UniRule"/>
</dbReference>
<dbReference type="CDD" id="cd18185">
    <property type="entry name" value="ATP-synt_Fo_c_ATPE"/>
    <property type="match status" value="1"/>
</dbReference>
<dbReference type="FunFam" id="1.20.20.10:FF:000004">
    <property type="entry name" value="ATP synthase subunit c"/>
    <property type="match status" value="1"/>
</dbReference>
<dbReference type="Gene3D" id="1.20.20.10">
    <property type="entry name" value="F1F0 ATP synthase subunit C"/>
    <property type="match status" value="1"/>
</dbReference>
<dbReference type="HAMAP" id="MF_01396">
    <property type="entry name" value="ATP_synth_c_bact"/>
    <property type="match status" value="1"/>
</dbReference>
<dbReference type="InterPro" id="IPR005953">
    <property type="entry name" value="ATP_synth_csu_bac/chlpt"/>
</dbReference>
<dbReference type="InterPro" id="IPR000454">
    <property type="entry name" value="ATP_synth_F0_csu"/>
</dbReference>
<dbReference type="InterPro" id="IPR020537">
    <property type="entry name" value="ATP_synth_F0_csu_DDCD_BS"/>
</dbReference>
<dbReference type="InterPro" id="IPR038662">
    <property type="entry name" value="ATP_synth_F0_csu_sf"/>
</dbReference>
<dbReference type="InterPro" id="IPR002379">
    <property type="entry name" value="ATPase_proteolipid_c-like_dom"/>
</dbReference>
<dbReference type="InterPro" id="IPR035921">
    <property type="entry name" value="F/V-ATP_Csub_sf"/>
</dbReference>
<dbReference type="NCBIfam" id="TIGR01260">
    <property type="entry name" value="ATP_synt_c"/>
    <property type="match status" value="1"/>
</dbReference>
<dbReference type="NCBIfam" id="NF005363">
    <property type="entry name" value="PRK06876.1"/>
    <property type="match status" value="1"/>
</dbReference>
<dbReference type="PANTHER" id="PTHR10031">
    <property type="entry name" value="ATP SYNTHASE LIPID-BINDING PROTEIN, MITOCHONDRIAL"/>
    <property type="match status" value="1"/>
</dbReference>
<dbReference type="PANTHER" id="PTHR10031:SF0">
    <property type="entry name" value="ATPASE PROTEIN 9"/>
    <property type="match status" value="1"/>
</dbReference>
<dbReference type="Pfam" id="PF00137">
    <property type="entry name" value="ATP-synt_C"/>
    <property type="match status" value="1"/>
</dbReference>
<dbReference type="PRINTS" id="PR00124">
    <property type="entry name" value="ATPASEC"/>
</dbReference>
<dbReference type="SUPFAM" id="SSF81333">
    <property type="entry name" value="F1F0 ATP synthase subunit C"/>
    <property type="match status" value="1"/>
</dbReference>
<dbReference type="PROSITE" id="PS00605">
    <property type="entry name" value="ATPASE_C"/>
    <property type="match status" value="1"/>
</dbReference>
<sequence>MGALAAAIAIGLAALGAGLGNGMIVSKTVEGIARQPELRGALQGTMFIGVALVEAIPIIAAVIAFMVM</sequence>
<name>ATPL_OCEIH</name>
<feature type="chain" id="PRO_1000184426" description="ATP synthase subunit c">
    <location>
        <begin position="1"/>
        <end position="68"/>
    </location>
</feature>
<feature type="transmembrane region" description="Helical" evidence="1">
    <location>
        <begin position="5"/>
        <end position="25"/>
    </location>
</feature>
<feature type="transmembrane region" description="Helical" evidence="1">
    <location>
        <begin position="47"/>
        <end position="67"/>
    </location>
</feature>
<feature type="site" description="Reversibly protonated during proton transport" evidence="1">
    <location>
        <position position="54"/>
    </location>
</feature>
<proteinExistence type="inferred from homology"/>